<comment type="function">
    <text evidence="2">Involved in the pathway that organizes the shaping and sizing of the prospore membrane (PSM) during sporulation. Probable component of a core structural unit of the scaffold that initiates synthesis of the prospore membrane.</text>
</comment>
<comment type="subunit">
    <text evidence="2">Interacts with itself. Interacts with MPC54, NUD1 and SPO21/MPC70.</text>
</comment>
<comment type="subcellular location">
    <subcellularLocation>
        <location evidence="2">Cytoplasm</location>
        <location evidence="2">Cytoskeleton</location>
        <location evidence="2">Microtubule organizing center</location>
        <location evidence="2">Spindle pole body</location>
    </subcellularLocation>
    <text>Localizes to the meiotic outer plaque of the spindle pole body (SPB), at the end of the meiotic spindles.</text>
</comment>
<comment type="developmental stage">
    <text evidence="2">Meiosis-specific.</text>
</comment>
<feature type="chain" id="PRO_0000072142" description="Sporulation-specific protein 74">
    <location>
        <begin position="1"/>
        <end position="413"/>
    </location>
</feature>
<feature type="region of interest" description="Disordered" evidence="1">
    <location>
        <begin position="1"/>
        <end position="87"/>
    </location>
</feature>
<feature type="compositionally biased region" description="Basic and acidic residues" evidence="1">
    <location>
        <begin position="69"/>
        <end position="83"/>
    </location>
</feature>
<feature type="sequence conflict" description="In Ref. 4; AAS56164." evidence="3" ref="4">
    <original>I</original>
    <variation>V</variation>
    <location>
        <position position="328"/>
    </location>
</feature>
<protein>
    <recommendedName>
        <fullName>Sporulation-specific protein 74</fullName>
    </recommendedName>
</protein>
<evidence type="ECO:0000256" key="1">
    <source>
        <dbReference type="SAM" id="MobiDB-lite"/>
    </source>
</evidence>
<evidence type="ECO:0000269" key="2">
    <source>
    </source>
</evidence>
<evidence type="ECO:0000305" key="3"/>
<dbReference type="EMBL" id="X85757">
    <property type="protein sequence ID" value="CAA59759.1"/>
    <property type="molecule type" value="Genomic_DNA"/>
</dbReference>
<dbReference type="EMBL" id="Z72692">
    <property type="protein sequence ID" value="CAA96882.1"/>
    <property type="molecule type" value="Genomic_DNA"/>
</dbReference>
<dbReference type="EMBL" id="AY557838">
    <property type="protein sequence ID" value="AAS56164.1"/>
    <property type="molecule type" value="Genomic_DNA"/>
</dbReference>
<dbReference type="EMBL" id="BK006941">
    <property type="protein sequence ID" value="DAA07943.1"/>
    <property type="molecule type" value="Genomic_DNA"/>
</dbReference>
<dbReference type="PIR" id="S59650">
    <property type="entry name" value="S59650"/>
</dbReference>
<dbReference type="RefSeq" id="NP_011345.3">
    <property type="nucleotide sequence ID" value="NM_001181035.3"/>
</dbReference>
<dbReference type="SMR" id="P45819"/>
<dbReference type="BioGRID" id="33083">
    <property type="interactions" value="134"/>
</dbReference>
<dbReference type="DIP" id="DIP-1458N"/>
<dbReference type="FunCoup" id="P45819">
    <property type="interactions" value="25"/>
</dbReference>
<dbReference type="IntAct" id="P45819">
    <property type="interactions" value="5"/>
</dbReference>
<dbReference type="MINT" id="P45819"/>
<dbReference type="STRING" id="4932.YGL170C"/>
<dbReference type="PaxDb" id="4932-YGL170C"/>
<dbReference type="PeptideAtlas" id="P45819"/>
<dbReference type="EnsemblFungi" id="YGL170C_mRNA">
    <property type="protein sequence ID" value="YGL170C"/>
    <property type="gene ID" value="YGL170C"/>
</dbReference>
<dbReference type="GeneID" id="852705"/>
<dbReference type="KEGG" id="sce:YGL170C"/>
<dbReference type="AGR" id="SGD:S000003138"/>
<dbReference type="SGD" id="S000003138">
    <property type="gene designation" value="SPO74"/>
</dbReference>
<dbReference type="VEuPathDB" id="FungiDB:YGL170C"/>
<dbReference type="HOGENOM" id="CLU_060606_0_0_1"/>
<dbReference type="InParanoid" id="P45819"/>
<dbReference type="OMA" id="RSNEEMY"/>
<dbReference type="OrthoDB" id="4041833at2759"/>
<dbReference type="BioCyc" id="YEAST:G3O-30658-MONOMER"/>
<dbReference type="BioGRID-ORCS" id="852705">
    <property type="hits" value="0 hits in 10 CRISPR screens"/>
</dbReference>
<dbReference type="CD-CODE" id="876000F7">
    <property type="entry name" value="Centrosome"/>
</dbReference>
<dbReference type="PRO" id="PR:P45819"/>
<dbReference type="Proteomes" id="UP000002311">
    <property type="component" value="Chromosome VII"/>
</dbReference>
<dbReference type="RNAct" id="P45819">
    <property type="molecule type" value="protein"/>
</dbReference>
<dbReference type="GO" id="GO:0005737">
    <property type="term" value="C:cytoplasm"/>
    <property type="evidence" value="ECO:0007669"/>
    <property type="project" value="UniProtKB-KW"/>
</dbReference>
<dbReference type="GO" id="GO:0035974">
    <property type="term" value="C:meiotic spindle pole body"/>
    <property type="evidence" value="ECO:0000314"/>
    <property type="project" value="SGD"/>
</dbReference>
<dbReference type="GO" id="GO:0005816">
    <property type="term" value="C:spindle pole body"/>
    <property type="evidence" value="ECO:0007005"/>
    <property type="project" value="SGD"/>
</dbReference>
<dbReference type="GO" id="GO:0005198">
    <property type="term" value="F:structural molecule activity"/>
    <property type="evidence" value="ECO:0000314"/>
    <property type="project" value="SGD"/>
</dbReference>
<dbReference type="GO" id="GO:0030437">
    <property type="term" value="P:ascospore formation"/>
    <property type="evidence" value="ECO:0000315"/>
    <property type="project" value="SGD"/>
</dbReference>
<keyword id="KW-0963">Cytoplasm</keyword>
<keyword id="KW-0206">Cytoskeleton</keyword>
<keyword id="KW-1185">Reference proteome</keyword>
<keyword id="KW-0749">Sporulation</keyword>
<organism>
    <name type="scientific">Saccharomyces cerevisiae (strain ATCC 204508 / S288c)</name>
    <name type="common">Baker's yeast</name>
    <dbReference type="NCBI Taxonomy" id="559292"/>
    <lineage>
        <taxon>Eukaryota</taxon>
        <taxon>Fungi</taxon>
        <taxon>Dikarya</taxon>
        <taxon>Ascomycota</taxon>
        <taxon>Saccharomycotina</taxon>
        <taxon>Saccharomycetes</taxon>
        <taxon>Saccharomycetales</taxon>
        <taxon>Saccharomycetaceae</taxon>
        <taxon>Saccharomyces</taxon>
    </lineage>
</organism>
<gene>
    <name type="primary">SPO74</name>
    <name type="ordered locus">YGL170C</name>
    <name type="ORF">G1654</name>
</gene>
<sequence>MGAGTLLNGLEKENFPNNIHSDLPAYPNMDSQEDGNTSKESKRNSPVKQKSQKDEEKSSKMGTASNIFHENKDIHERSEHTDDFNDGLKLAPDSSPSLKECQFKNWESFWCNTEGYKTKHMQPFHFTSGLEEIKEPVMELNISTSPYKGQRPNSAPTEYSAATTAFTKTQLEVSFLKTNLLTYIKKEIDICLSSVPFFDDAVQMQKKFLEYRDIDLDEEYELKILGELLNDLNFFHMQENSLLNRELAVRRFSNQPESQNLPSIRDFRNPLLPIDNRPSPPLGLKRNGKSFEETYDFTSNTSNFWGEKAELQNSITGGTPYFFHPNNIHQTKPFMSFENQNELLFQRKNSDYKQHFNSGRNIHNGVESKSYRGVGLNDSYQKGYAAMTKSFGNIDLNRMPRRSNEEMYSWSRN</sequence>
<accession>P45819</accession>
<accession>D6VTY2</accession>
<accession>E9P8T5</accession>
<name>SPO74_YEAST</name>
<reference key="1">
    <citation type="journal article" date="1996" name="Yeast">
        <title>A putative helicase, the SUA5, PMR1, tRNALys1 genes and four open reading frames have been detected in the DNA sequence of an 8.8 kb fragment of the left arm of chromosome VII of Saccharomyces cerevisiae.</title>
        <authorList>
            <person name="Klima R."/>
            <person name="Coglievina M."/>
            <person name="Zaccaria P."/>
            <person name="Bertani I."/>
            <person name="Bruschi C.V."/>
        </authorList>
    </citation>
    <scope>NUCLEOTIDE SEQUENCE [GENOMIC DNA]</scope>
    <source>
        <strain>ATCC 96604 / S288c / FY1679</strain>
    </source>
</reference>
<reference key="2">
    <citation type="journal article" date="1997" name="Nature">
        <title>The nucleotide sequence of Saccharomyces cerevisiae chromosome VII.</title>
        <authorList>
            <person name="Tettelin H."/>
            <person name="Agostoni-Carbone M.L."/>
            <person name="Albermann K."/>
            <person name="Albers M."/>
            <person name="Arroyo J."/>
            <person name="Backes U."/>
            <person name="Barreiros T."/>
            <person name="Bertani I."/>
            <person name="Bjourson A.J."/>
            <person name="Brueckner M."/>
            <person name="Bruschi C.V."/>
            <person name="Carignani G."/>
            <person name="Castagnoli L."/>
            <person name="Cerdan E."/>
            <person name="Clemente M.L."/>
            <person name="Coblenz A."/>
            <person name="Coglievina M."/>
            <person name="Coissac E."/>
            <person name="Defoor E."/>
            <person name="Del Bino S."/>
            <person name="Delius H."/>
            <person name="Delneri D."/>
            <person name="de Wergifosse P."/>
            <person name="Dujon B."/>
            <person name="Durand P."/>
            <person name="Entian K.-D."/>
            <person name="Eraso P."/>
            <person name="Escribano V."/>
            <person name="Fabiani L."/>
            <person name="Fartmann B."/>
            <person name="Feroli F."/>
            <person name="Feuermann M."/>
            <person name="Frontali L."/>
            <person name="Garcia-Gonzalez M."/>
            <person name="Garcia-Saez M.I."/>
            <person name="Goffeau A."/>
            <person name="Guerreiro P."/>
            <person name="Hani J."/>
            <person name="Hansen M."/>
            <person name="Hebling U."/>
            <person name="Hernandez K."/>
            <person name="Heumann K."/>
            <person name="Hilger F."/>
            <person name="Hofmann B."/>
            <person name="Indge K.J."/>
            <person name="James C.M."/>
            <person name="Klima R."/>
            <person name="Koetter P."/>
            <person name="Kramer B."/>
            <person name="Kramer W."/>
            <person name="Lauquin G."/>
            <person name="Leuther H."/>
            <person name="Louis E.J."/>
            <person name="Maillier E."/>
            <person name="Marconi A."/>
            <person name="Martegani E."/>
            <person name="Mazon M.J."/>
            <person name="Mazzoni C."/>
            <person name="McReynolds A.D.K."/>
            <person name="Melchioretto P."/>
            <person name="Mewes H.-W."/>
            <person name="Minenkova O."/>
            <person name="Mueller-Auer S."/>
            <person name="Nawrocki A."/>
            <person name="Netter P."/>
            <person name="Neu R."/>
            <person name="Nombela C."/>
            <person name="Oliver S.G."/>
            <person name="Panzeri L."/>
            <person name="Paoluzi S."/>
            <person name="Plevani P."/>
            <person name="Portetelle D."/>
            <person name="Portillo F."/>
            <person name="Potier S."/>
            <person name="Purnelle B."/>
            <person name="Rieger M."/>
            <person name="Riles L."/>
            <person name="Rinaldi T."/>
            <person name="Robben J."/>
            <person name="Rodrigues-Pousada C."/>
            <person name="Rodriguez-Belmonte E."/>
            <person name="Rodriguez-Torres A.M."/>
            <person name="Rose M."/>
            <person name="Ruzzi M."/>
            <person name="Saliola M."/>
            <person name="Sanchez-Perez M."/>
            <person name="Schaefer B."/>
            <person name="Schaefer M."/>
            <person name="Scharfe M."/>
            <person name="Schmidheini T."/>
            <person name="Schreer A."/>
            <person name="Skala J."/>
            <person name="Souciet J.-L."/>
            <person name="Steensma H.Y."/>
            <person name="Talla E."/>
            <person name="Thierry A."/>
            <person name="Vandenbol M."/>
            <person name="van der Aart Q.J.M."/>
            <person name="Van Dyck L."/>
            <person name="Vanoni M."/>
            <person name="Verhasselt P."/>
            <person name="Voet M."/>
            <person name="Volckaert G."/>
            <person name="Wambutt R."/>
            <person name="Watson M.D."/>
            <person name="Weber N."/>
            <person name="Wedler E."/>
            <person name="Wedler H."/>
            <person name="Wipfli P."/>
            <person name="Wolf K."/>
            <person name="Wright L.F."/>
            <person name="Zaccaria P."/>
            <person name="Zimmermann M."/>
            <person name="Zollner A."/>
            <person name="Kleine K."/>
        </authorList>
    </citation>
    <scope>NUCLEOTIDE SEQUENCE [LARGE SCALE GENOMIC DNA]</scope>
    <source>
        <strain>ATCC 204508 / S288c</strain>
    </source>
</reference>
<reference key="3">
    <citation type="journal article" date="2014" name="G3 (Bethesda)">
        <title>The reference genome sequence of Saccharomyces cerevisiae: Then and now.</title>
        <authorList>
            <person name="Engel S.R."/>
            <person name="Dietrich F.S."/>
            <person name="Fisk D.G."/>
            <person name="Binkley G."/>
            <person name="Balakrishnan R."/>
            <person name="Costanzo M.C."/>
            <person name="Dwight S.S."/>
            <person name="Hitz B.C."/>
            <person name="Karra K."/>
            <person name="Nash R.S."/>
            <person name="Weng S."/>
            <person name="Wong E.D."/>
            <person name="Lloyd P."/>
            <person name="Skrzypek M.S."/>
            <person name="Miyasato S.R."/>
            <person name="Simison M."/>
            <person name="Cherry J.M."/>
        </authorList>
    </citation>
    <scope>GENOME REANNOTATION</scope>
    <source>
        <strain>ATCC 204508 / S288c</strain>
    </source>
</reference>
<reference key="4">
    <citation type="journal article" date="2007" name="Genome Res.">
        <title>Approaching a complete repository of sequence-verified protein-encoding clones for Saccharomyces cerevisiae.</title>
        <authorList>
            <person name="Hu Y."/>
            <person name="Rolfs A."/>
            <person name="Bhullar B."/>
            <person name="Murthy T.V.S."/>
            <person name="Zhu C."/>
            <person name="Berger M.F."/>
            <person name="Camargo A.A."/>
            <person name="Kelley F."/>
            <person name="McCarron S."/>
            <person name="Jepson D."/>
            <person name="Richardson A."/>
            <person name="Raphael J."/>
            <person name="Moreira D."/>
            <person name="Taycher E."/>
            <person name="Zuo D."/>
            <person name="Mohr S."/>
            <person name="Kane M.F."/>
            <person name="Williamson J."/>
            <person name="Simpson A.J.G."/>
            <person name="Bulyk M.L."/>
            <person name="Harlow E."/>
            <person name="Marsischky G."/>
            <person name="Kolodner R.D."/>
            <person name="LaBaer J."/>
        </authorList>
    </citation>
    <scope>NUCLEOTIDE SEQUENCE [GENOMIC DNA]</scope>
    <source>
        <strain>ATCC 204508 / S288c</strain>
    </source>
</reference>
<reference key="5">
    <citation type="journal article" date="2003" name="Eukaryot. Cell">
        <title>Ady4p and Spo74p are components of the meiotic spindle pole body that promote growth of the prospore membrane in Saccharomyces cerevisiae.</title>
        <authorList>
            <person name="Nickas M.E."/>
            <person name="Schwartz C."/>
            <person name="Neiman A.M."/>
        </authorList>
    </citation>
    <scope>FUNCTION</scope>
    <scope>SUBCELLULAR LOCATION</scope>
    <scope>DEVELOPMENTAL STAGE</scope>
    <scope>INTERACTION WITH SPO21 AND MPC54</scope>
</reference>
<proteinExistence type="evidence at protein level"/>